<feature type="chain" id="PRO_1000079360" description="Polyphosphate kinase">
    <location>
        <begin position="1"/>
        <end position="694"/>
    </location>
</feature>
<feature type="active site" description="Phosphohistidine intermediate" evidence="1">
    <location>
        <position position="427"/>
    </location>
</feature>
<feature type="binding site" evidence="1">
    <location>
        <position position="45"/>
    </location>
    <ligand>
        <name>ATP</name>
        <dbReference type="ChEBI" id="CHEBI:30616"/>
    </ligand>
</feature>
<feature type="binding site" evidence="1">
    <location>
        <position position="367"/>
    </location>
    <ligand>
        <name>Mg(2+)</name>
        <dbReference type="ChEBI" id="CHEBI:18420"/>
    </ligand>
</feature>
<feature type="binding site" evidence="1">
    <location>
        <position position="397"/>
    </location>
    <ligand>
        <name>Mg(2+)</name>
        <dbReference type="ChEBI" id="CHEBI:18420"/>
    </ligand>
</feature>
<feature type="binding site" evidence="1">
    <location>
        <position position="460"/>
    </location>
    <ligand>
        <name>ATP</name>
        <dbReference type="ChEBI" id="CHEBI:30616"/>
    </ligand>
</feature>
<feature type="binding site" evidence="1">
    <location>
        <position position="553"/>
    </location>
    <ligand>
        <name>ATP</name>
        <dbReference type="ChEBI" id="CHEBI:30616"/>
    </ligand>
</feature>
<feature type="binding site" evidence="1">
    <location>
        <position position="580"/>
    </location>
    <ligand>
        <name>ATP</name>
        <dbReference type="ChEBI" id="CHEBI:30616"/>
    </ligand>
</feature>
<accession>A7H220</accession>
<comment type="function">
    <text evidence="1">Catalyzes the reversible transfer of the terminal phosphate of ATP to form a long-chain polyphosphate (polyP).</text>
</comment>
<comment type="catalytic activity">
    <reaction evidence="1">
        <text>[phosphate](n) + ATP = [phosphate](n+1) + ADP</text>
        <dbReference type="Rhea" id="RHEA:19573"/>
        <dbReference type="Rhea" id="RHEA-COMP:9859"/>
        <dbReference type="Rhea" id="RHEA-COMP:14280"/>
        <dbReference type="ChEBI" id="CHEBI:16838"/>
        <dbReference type="ChEBI" id="CHEBI:30616"/>
        <dbReference type="ChEBI" id="CHEBI:456216"/>
        <dbReference type="EC" id="2.7.4.1"/>
    </reaction>
</comment>
<comment type="cofactor">
    <cofactor evidence="1">
        <name>Mg(2+)</name>
        <dbReference type="ChEBI" id="CHEBI:18420"/>
    </cofactor>
</comment>
<comment type="PTM">
    <text evidence="1">An intermediate of this reaction is the autophosphorylated ppk in which a phosphate is covalently linked to a histidine residue through a N-P bond.</text>
</comment>
<comment type="similarity">
    <text evidence="1">Belongs to the polyphosphate kinase 1 (PPK1) family.</text>
</comment>
<gene>
    <name evidence="1" type="primary">ppk</name>
    <name type="ordered locus">JJD26997_0339</name>
</gene>
<proteinExistence type="inferred from homology"/>
<protein>
    <recommendedName>
        <fullName evidence="1">Polyphosphate kinase</fullName>
        <ecNumber evidence="1">2.7.4.1</ecNumber>
    </recommendedName>
    <alternativeName>
        <fullName evidence="1">ATP-polyphosphate phosphotransferase</fullName>
    </alternativeName>
    <alternativeName>
        <fullName evidence="1">Polyphosphoric acid kinase</fullName>
    </alternativeName>
</protein>
<reference key="1">
    <citation type="submission" date="2007-07" db="EMBL/GenBank/DDBJ databases">
        <title>Complete genome sequence of Campylobacter jejuni subsp doylei 269.97 isolated from human blood.</title>
        <authorList>
            <person name="Fouts D.E."/>
            <person name="Mongodin E.F."/>
            <person name="Puiu D."/>
            <person name="Sebastian Y."/>
            <person name="Miller W.G."/>
            <person name="Mandrell R.E."/>
            <person name="Lastovica A.J."/>
            <person name="Nelson K.E."/>
        </authorList>
    </citation>
    <scope>NUCLEOTIDE SEQUENCE [LARGE SCALE GENOMIC DNA]</scope>
    <source>
        <strain>ATCC BAA-1458 / RM4099 / 269.97</strain>
    </source>
</reference>
<evidence type="ECO:0000255" key="1">
    <source>
        <dbReference type="HAMAP-Rule" id="MF_00347"/>
    </source>
</evidence>
<dbReference type="EC" id="2.7.4.1" evidence="1"/>
<dbReference type="EMBL" id="CP000768">
    <property type="protein sequence ID" value="ABS43448.1"/>
    <property type="molecule type" value="Genomic_DNA"/>
</dbReference>
<dbReference type="SMR" id="A7H220"/>
<dbReference type="KEGG" id="cjd:JJD26997_0339"/>
<dbReference type="HOGENOM" id="CLU_009678_1_1_7"/>
<dbReference type="Proteomes" id="UP000002302">
    <property type="component" value="Chromosome"/>
</dbReference>
<dbReference type="GO" id="GO:0009358">
    <property type="term" value="C:polyphosphate kinase complex"/>
    <property type="evidence" value="ECO:0007669"/>
    <property type="project" value="InterPro"/>
</dbReference>
<dbReference type="GO" id="GO:0005524">
    <property type="term" value="F:ATP binding"/>
    <property type="evidence" value="ECO:0007669"/>
    <property type="project" value="UniProtKB-KW"/>
</dbReference>
<dbReference type="GO" id="GO:0046872">
    <property type="term" value="F:metal ion binding"/>
    <property type="evidence" value="ECO:0007669"/>
    <property type="project" value="UniProtKB-KW"/>
</dbReference>
<dbReference type="GO" id="GO:0008976">
    <property type="term" value="F:polyphosphate kinase activity"/>
    <property type="evidence" value="ECO:0007669"/>
    <property type="project" value="UniProtKB-UniRule"/>
</dbReference>
<dbReference type="GO" id="GO:0006799">
    <property type="term" value="P:polyphosphate biosynthetic process"/>
    <property type="evidence" value="ECO:0007669"/>
    <property type="project" value="UniProtKB-UniRule"/>
</dbReference>
<dbReference type="CDD" id="cd09165">
    <property type="entry name" value="PLDc_PaPPK1_C1_like"/>
    <property type="match status" value="1"/>
</dbReference>
<dbReference type="CDD" id="cd09168">
    <property type="entry name" value="PLDc_PaPPK1_C2_like"/>
    <property type="match status" value="1"/>
</dbReference>
<dbReference type="Gene3D" id="3.30.870.10">
    <property type="entry name" value="Endonuclease Chain A"/>
    <property type="match status" value="2"/>
</dbReference>
<dbReference type="Gene3D" id="3.30.1840.10">
    <property type="entry name" value="Polyphosphate kinase middle domain"/>
    <property type="match status" value="1"/>
</dbReference>
<dbReference type="Gene3D" id="1.20.58.310">
    <property type="entry name" value="Polyphosphate kinase N-terminal domain"/>
    <property type="match status" value="1"/>
</dbReference>
<dbReference type="HAMAP" id="MF_00347">
    <property type="entry name" value="Polyphosphate_kinase"/>
    <property type="match status" value="1"/>
</dbReference>
<dbReference type="InterPro" id="IPR003414">
    <property type="entry name" value="PP_kinase"/>
</dbReference>
<dbReference type="InterPro" id="IPR041108">
    <property type="entry name" value="PP_kinase_C_1"/>
</dbReference>
<dbReference type="InterPro" id="IPR024953">
    <property type="entry name" value="PP_kinase_middle"/>
</dbReference>
<dbReference type="InterPro" id="IPR036830">
    <property type="entry name" value="PP_kinase_middle_dom_sf"/>
</dbReference>
<dbReference type="InterPro" id="IPR025200">
    <property type="entry name" value="PPK_C_dom2"/>
</dbReference>
<dbReference type="InterPro" id="IPR025198">
    <property type="entry name" value="PPK_N_dom"/>
</dbReference>
<dbReference type="InterPro" id="IPR036832">
    <property type="entry name" value="PPK_N_dom_sf"/>
</dbReference>
<dbReference type="NCBIfam" id="TIGR03705">
    <property type="entry name" value="poly_P_kin"/>
    <property type="match status" value="1"/>
</dbReference>
<dbReference type="NCBIfam" id="NF003921">
    <property type="entry name" value="PRK05443.2-2"/>
    <property type="match status" value="1"/>
</dbReference>
<dbReference type="NCBIfam" id="NF003924">
    <property type="entry name" value="PRK05443.3-2"/>
    <property type="match status" value="1"/>
</dbReference>
<dbReference type="PANTHER" id="PTHR30218">
    <property type="entry name" value="POLYPHOSPHATE KINASE"/>
    <property type="match status" value="1"/>
</dbReference>
<dbReference type="PANTHER" id="PTHR30218:SF0">
    <property type="entry name" value="POLYPHOSPHATE KINASE"/>
    <property type="match status" value="1"/>
</dbReference>
<dbReference type="Pfam" id="PF02503">
    <property type="entry name" value="PP_kinase"/>
    <property type="match status" value="1"/>
</dbReference>
<dbReference type="Pfam" id="PF13090">
    <property type="entry name" value="PP_kinase_C"/>
    <property type="match status" value="1"/>
</dbReference>
<dbReference type="Pfam" id="PF17941">
    <property type="entry name" value="PP_kinase_C_1"/>
    <property type="match status" value="1"/>
</dbReference>
<dbReference type="Pfam" id="PF13089">
    <property type="entry name" value="PP_kinase_N"/>
    <property type="match status" value="1"/>
</dbReference>
<dbReference type="PIRSF" id="PIRSF015589">
    <property type="entry name" value="PP_kinase"/>
    <property type="match status" value="1"/>
</dbReference>
<dbReference type="SUPFAM" id="SSF56024">
    <property type="entry name" value="Phospholipase D/nuclease"/>
    <property type="match status" value="2"/>
</dbReference>
<dbReference type="SUPFAM" id="SSF143724">
    <property type="entry name" value="PHP14-like"/>
    <property type="match status" value="1"/>
</dbReference>
<dbReference type="SUPFAM" id="SSF140356">
    <property type="entry name" value="PPK N-terminal domain-like"/>
    <property type="match status" value="1"/>
</dbReference>
<keyword id="KW-0067">ATP-binding</keyword>
<keyword id="KW-0418">Kinase</keyword>
<keyword id="KW-0460">Magnesium</keyword>
<keyword id="KW-0479">Metal-binding</keyword>
<keyword id="KW-0547">Nucleotide-binding</keyword>
<keyword id="KW-0597">Phosphoprotein</keyword>
<keyword id="KW-0808">Transferase</keyword>
<organism>
    <name type="scientific">Campylobacter jejuni subsp. doylei (strain ATCC BAA-1458 / RM4099 / 269.97)</name>
    <dbReference type="NCBI Taxonomy" id="360109"/>
    <lineage>
        <taxon>Bacteria</taxon>
        <taxon>Pseudomonadati</taxon>
        <taxon>Campylobacterota</taxon>
        <taxon>Epsilonproteobacteria</taxon>
        <taxon>Campylobacterales</taxon>
        <taxon>Campylobacteraceae</taxon>
        <taxon>Campylobacter</taxon>
    </lineage>
</organism>
<name>PPK1_CAMJD</name>
<sequence>MQTSPDMFINRELSWLRFNSRVLDQCSKNLPLLEKLKFIAIYCTNLDEFYMIRVAGLKQLFSAGVNASSSDEMTPLQQLKAIRKYLHQEKELLEHYFNEITSELEKENLFIKHYENLDENLKQKCDEYFFSNIFPVIVPIAVDATHPFPHLNNLSFSLAVKIFDKAHPELVKFGMIRIPRVLPRFYEVSANIYVPIESIVHQHAEEIFPGYKLLASAAFRVTRNADMVIEEEEADDFMMILEQGLKLRRKGAFVRLQIQKDADEQIVEFLNTHMKIFHKDVYEYSILLNLPSLWQIAGNKNFTHLLSPLYTPKTLPPFDENLSIFDAVEKEDILIIQPFESFDPVYKFIKEASKDPEVISIRMTLYRVEKNSNIVQALIDAASDGKQVTVMVELKARFDEENNLHWAKALENAGAHVIYGITGFKVHAKVSQVIRKQGDKLKFYMHLSTGNYNASSAKIYTDVSYFTSKAEFARDTTSFFHILSGFSKNRRLQTLSMSPNQIKEKILEMIRIETSKKNKGVIVAKMNSLVDSDIIQALYEASMEGVKIDLIIRGICCLKPDEEYSKNIRVRSIIGKYLEHARVFYFKHSEPNYFISSADWMPRNLERRLELMTPIYDERSKAKLAQFLRLQLSDNVLAYELKNNGEYEKIPSSEKTIDSQQTLEEYVSKIYKTLKKDTDQSRATHLASKLFKEN</sequence>